<proteinExistence type="inferred from homology"/>
<evidence type="ECO:0000255" key="1">
    <source>
        <dbReference type="HAMAP-Rule" id="MF_00144"/>
    </source>
</evidence>
<comment type="function">
    <text evidence="1">Catalyzes the 2-thiolation of uridine at the wobble position (U34) of tRNA, leading to the formation of s(2)U34.</text>
</comment>
<comment type="catalytic activity">
    <reaction evidence="1">
        <text>S-sulfanyl-L-cysteinyl-[protein] + uridine(34) in tRNA + AH2 + ATP = 2-thiouridine(34) in tRNA + L-cysteinyl-[protein] + A + AMP + diphosphate + H(+)</text>
        <dbReference type="Rhea" id="RHEA:47032"/>
        <dbReference type="Rhea" id="RHEA-COMP:10131"/>
        <dbReference type="Rhea" id="RHEA-COMP:11726"/>
        <dbReference type="Rhea" id="RHEA-COMP:11727"/>
        <dbReference type="Rhea" id="RHEA-COMP:11728"/>
        <dbReference type="ChEBI" id="CHEBI:13193"/>
        <dbReference type="ChEBI" id="CHEBI:15378"/>
        <dbReference type="ChEBI" id="CHEBI:17499"/>
        <dbReference type="ChEBI" id="CHEBI:29950"/>
        <dbReference type="ChEBI" id="CHEBI:30616"/>
        <dbReference type="ChEBI" id="CHEBI:33019"/>
        <dbReference type="ChEBI" id="CHEBI:61963"/>
        <dbReference type="ChEBI" id="CHEBI:65315"/>
        <dbReference type="ChEBI" id="CHEBI:87170"/>
        <dbReference type="ChEBI" id="CHEBI:456215"/>
        <dbReference type="EC" id="2.8.1.13"/>
    </reaction>
</comment>
<comment type="subcellular location">
    <subcellularLocation>
        <location evidence="1">Cytoplasm</location>
    </subcellularLocation>
</comment>
<comment type="similarity">
    <text evidence="1">Belongs to the MnmA/TRMU family.</text>
</comment>
<organism>
    <name type="scientific">Borrelia garinii subsp. bavariensis (strain ATCC BAA-2496 / DSM 23469 / PBi)</name>
    <name type="common">Borreliella bavariensis</name>
    <dbReference type="NCBI Taxonomy" id="290434"/>
    <lineage>
        <taxon>Bacteria</taxon>
        <taxon>Pseudomonadati</taxon>
        <taxon>Spirochaetota</taxon>
        <taxon>Spirochaetia</taxon>
        <taxon>Spirochaetales</taxon>
        <taxon>Borreliaceae</taxon>
        <taxon>Borreliella</taxon>
    </lineage>
</organism>
<reference key="1">
    <citation type="journal article" date="2004" name="Nucleic Acids Res.">
        <title>Comparative analysis of the Borrelia garinii genome.</title>
        <authorList>
            <person name="Gloeckner G."/>
            <person name="Lehmann R."/>
            <person name="Romualdi A."/>
            <person name="Pradella S."/>
            <person name="Schulte-Spechtel U."/>
            <person name="Schilhabel M."/>
            <person name="Wilske B."/>
            <person name="Suehnel J."/>
            <person name="Platzer M."/>
        </authorList>
    </citation>
    <scope>NUCLEOTIDE SEQUENCE [LARGE SCALE GENOMIC DNA]</scope>
    <source>
        <strain>ATCC BAA-2496 / DSM 23469 / PBi</strain>
    </source>
</reference>
<dbReference type="EC" id="2.8.1.13" evidence="1"/>
<dbReference type="EMBL" id="CP000013">
    <property type="protein sequence ID" value="AAU07533.1"/>
    <property type="molecule type" value="Genomic_DNA"/>
</dbReference>
<dbReference type="RefSeq" id="WP_011193986.1">
    <property type="nucleotide sequence ID" value="NZ_CP028872.1"/>
</dbReference>
<dbReference type="SMR" id="Q660I8"/>
<dbReference type="GeneID" id="45161480"/>
<dbReference type="KEGG" id="bga:BG0705"/>
<dbReference type="eggNOG" id="COG0482">
    <property type="taxonomic scope" value="Bacteria"/>
</dbReference>
<dbReference type="HOGENOM" id="CLU_035188_1_0_12"/>
<dbReference type="OrthoDB" id="9800696at2"/>
<dbReference type="Proteomes" id="UP000002276">
    <property type="component" value="Chromosome"/>
</dbReference>
<dbReference type="GO" id="GO:0005737">
    <property type="term" value="C:cytoplasm"/>
    <property type="evidence" value="ECO:0007669"/>
    <property type="project" value="UniProtKB-SubCell"/>
</dbReference>
<dbReference type="GO" id="GO:0005524">
    <property type="term" value="F:ATP binding"/>
    <property type="evidence" value="ECO:0007669"/>
    <property type="project" value="UniProtKB-KW"/>
</dbReference>
<dbReference type="GO" id="GO:0000049">
    <property type="term" value="F:tRNA binding"/>
    <property type="evidence" value="ECO:0007669"/>
    <property type="project" value="UniProtKB-KW"/>
</dbReference>
<dbReference type="GO" id="GO:0103016">
    <property type="term" value="F:tRNA-uridine 2-sulfurtransferase activity"/>
    <property type="evidence" value="ECO:0007669"/>
    <property type="project" value="UniProtKB-EC"/>
</dbReference>
<dbReference type="GO" id="GO:0006400">
    <property type="term" value="P:tRNA modification"/>
    <property type="evidence" value="ECO:0007669"/>
    <property type="project" value="UniProtKB-UniRule"/>
</dbReference>
<dbReference type="CDD" id="cd01998">
    <property type="entry name" value="MnmA_TRMU-like"/>
    <property type="match status" value="1"/>
</dbReference>
<dbReference type="FunFam" id="2.30.30.280:FF:000001">
    <property type="entry name" value="tRNA-specific 2-thiouridylase MnmA"/>
    <property type="match status" value="1"/>
</dbReference>
<dbReference type="Gene3D" id="2.30.30.280">
    <property type="entry name" value="Adenine nucleotide alpha hydrolases-like domains"/>
    <property type="match status" value="1"/>
</dbReference>
<dbReference type="Gene3D" id="3.40.50.620">
    <property type="entry name" value="HUPs"/>
    <property type="match status" value="1"/>
</dbReference>
<dbReference type="Gene3D" id="2.40.30.10">
    <property type="entry name" value="Translation factors"/>
    <property type="match status" value="1"/>
</dbReference>
<dbReference type="HAMAP" id="MF_00144">
    <property type="entry name" value="tRNA_thiouridyl_MnmA"/>
    <property type="match status" value="1"/>
</dbReference>
<dbReference type="InterPro" id="IPR004506">
    <property type="entry name" value="MnmA-like"/>
</dbReference>
<dbReference type="InterPro" id="IPR046885">
    <property type="entry name" value="MnmA-like_C"/>
</dbReference>
<dbReference type="InterPro" id="IPR046884">
    <property type="entry name" value="MnmA-like_central"/>
</dbReference>
<dbReference type="InterPro" id="IPR023382">
    <property type="entry name" value="MnmA-like_central_sf"/>
</dbReference>
<dbReference type="InterPro" id="IPR014729">
    <property type="entry name" value="Rossmann-like_a/b/a_fold"/>
</dbReference>
<dbReference type="InterPro" id="IPR051305">
    <property type="entry name" value="tRNA_2-thiouridylase_MnmA"/>
</dbReference>
<dbReference type="NCBIfam" id="NF001138">
    <property type="entry name" value="PRK00143.1"/>
    <property type="match status" value="1"/>
</dbReference>
<dbReference type="NCBIfam" id="TIGR00420">
    <property type="entry name" value="trmU"/>
    <property type="match status" value="1"/>
</dbReference>
<dbReference type="PANTHER" id="PTHR43052">
    <property type="match status" value="1"/>
</dbReference>
<dbReference type="PANTHER" id="PTHR43052:SF1">
    <property type="entry name" value="TRNA-5-TAURINOMETHYLURIDINE 2-SULFURTRANSFERASE"/>
    <property type="match status" value="1"/>
</dbReference>
<dbReference type="Pfam" id="PF03054">
    <property type="entry name" value="tRNA_Me_trans"/>
    <property type="match status" value="1"/>
</dbReference>
<dbReference type="Pfam" id="PF20258">
    <property type="entry name" value="tRNA_Me_trans_C"/>
    <property type="match status" value="1"/>
</dbReference>
<dbReference type="Pfam" id="PF20259">
    <property type="entry name" value="tRNA_Me_trans_M"/>
    <property type="match status" value="1"/>
</dbReference>
<dbReference type="SUPFAM" id="SSF52402">
    <property type="entry name" value="Adenine nucleotide alpha hydrolases-like"/>
    <property type="match status" value="1"/>
</dbReference>
<gene>
    <name evidence="1" type="primary">mnmA</name>
    <name type="synonym">trmU</name>
    <name type="ordered locus">BG0705</name>
</gene>
<name>MNMA_BORGP</name>
<feature type="chain" id="PRO_0000121611" description="tRNA-specific 2-thiouridylase MnmA">
    <location>
        <begin position="1"/>
        <end position="355"/>
    </location>
</feature>
<feature type="region of interest" description="Interaction with tRNA" evidence="1">
    <location>
        <begin position="145"/>
        <end position="147"/>
    </location>
</feature>
<feature type="active site" description="Nucleophile" evidence="1">
    <location>
        <position position="100"/>
    </location>
</feature>
<feature type="active site" description="Cysteine persulfide intermediate" evidence="1">
    <location>
        <position position="195"/>
    </location>
</feature>
<feature type="binding site" evidence="1">
    <location>
        <begin position="6"/>
        <end position="13"/>
    </location>
    <ligand>
        <name>ATP</name>
        <dbReference type="ChEBI" id="CHEBI:30616"/>
    </ligand>
</feature>
<feature type="binding site" evidence="1">
    <location>
        <position position="33"/>
    </location>
    <ligand>
        <name>ATP</name>
        <dbReference type="ChEBI" id="CHEBI:30616"/>
    </ligand>
</feature>
<feature type="binding site" evidence="1">
    <location>
        <position position="123"/>
    </location>
    <ligand>
        <name>ATP</name>
        <dbReference type="ChEBI" id="CHEBI:30616"/>
    </ligand>
</feature>
<feature type="site" description="Interaction with tRNA" evidence="1">
    <location>
        <position position="124"/>
    </location>
</feature>
<feature type="site" description="Interaction with tRNA" evidence="1">
    <location>
        <position position="334"/>
    </location>
</feature>
<feature type="disulfide bond" description="Alternate" evidence="1">
    <location>
        <begin position="100"/>
        <end position="195"/>
    </location>
</feature>
<accession>Q660I8</accession>
<sequence>MKIAVLLSGGVDSSIALYKVINKGYTNIKCYYLKIWLEDELSYIGNCPWQEDLNYVEAVCNKFNIPYEIINFQKEYYNKVVIYTIEELKNGNTPSPDIFCNQRIKFGAFFEKINEQYDLVVTGHYARIQIKEKKFFLKQAKDKIKDQSYFLSHLSQEQMSKLYFPLGTLFKSEVRQIAKSINLPNKDRKDSQGICFLGKIKYNEFIKYHLGEKKGNIVEKETGKIIGIHNGYWFFTVGQRRGIKLSNGPWFVIEKDLEKNIIYISHNENYLKQAKRKFLVHEIHWINGMPSDFENFKIKIRHGEKKYSCKLRLITNNLIEIFLNKKDHGISPGQFAIFYKNTECLGGAKIFKIIE</sequence>
<keyword id="KW-0067">ATP-binding</keyword>
<keyword id="KW-0963">Cytoplasm</keyword>
<keyword id="KW-1015">Disulfide bond</keyword>
<keyword id="KW-0547">Nucleotide-binding</keyword>
<keyword id="KW-0694">RNA-binding</keyword>
<keyword id="KW-0808">Transferase</keyword>
<keyword id="KW-0819">tRNA processing</keyword>
<keyword id="KW-0820">tRNA-binding</keyword>
<protein>
    <recommendedName>
        <fullName evidence="1">tRNA-specific 2-thiouridylase MnmA</fullName>
        <ecNumber evidence="1">2.8.1.13</ecNumber>
    </recommendedName>
</protein>